<protein>
    <recommendedName>
        <fullName>Uncharacterized membrane protein YvbJ</fullName>
    </recommendedName>
</protein>
<name>YVBJ_BACSU</name>
<proteinExistence type="predicted"/>
<evidence type="ECO:0000255" key="1"/>
<evidence type="ECO:0000305" key="2"/>
<keyword id="KW-1003">Cell membrane</keyword>
<keyword id="KW-0472">Membrane</keyword>
<keyword id="KW-1185">Reference proteome</keyword>
<keyword id="KW-0812">Transmembrane</keyword>
<keyword id="KW-1133">Transmembrane helix</keyword>
<sequence>MLFCKNCGSQNNEGAKFCKQCGTPIGGGSKQANQETASTAETRQAPRKPIPKKTIILWSSIAAACVILFAAYKTGAYFTSKDRLVDKFEQAVNDGDQDQIATLLTPVNDNLKLTKNNVKPFLTYLKDHPDKKDELFASLRDETAQKDIVYAEKDGKSLLVFDHYDLKVAPVYFEVSSNYKNTDLYVNKEEAGSVKKADQAQTLGPYIPGEYTVSAKLKNDVVDLVKKEDIQAIGDSSFRVDLSLEADDVTFSLANDIKSGKGDLLINGKSIHKDPFKSVTYGPLLTDGSMTASVEAEFPWGKTKTAGVPIDDKEMELTLIPDQDTQEQIMNTIVKTTKQYSKALSDGNTAQMTEASANWKAETKDTVDSMKSADSYLKDRYLETDFDLDTFALSQKNDGTWQVSVTGKELHQSSSYNDYTKSEMTDDSPSYEYLLSYDKKQKKWIFEDAESTFESAGTNIKKIKNDKPETYTSAWAGSKNKGSESSASGDVTDEQVTLFMGSYLQSQADAVNQNNFSLMEDSLEKGSSLYSDQQHLVSKLNKEGTTEDFNNYEVKSWSQNGSAITIKTYEEFYITKSGGSPKLRTYNWTYTGVVKNGRIYLTSIQ</sequence>
<reference key="1">
    <citation type="journal article" date="1997" name="Nature">
        <title>The complete genome sequence of the Gram-positive bacterium Bacillus subtilis.</title>
        <authorList>
            <person name="Kunst F."/>
            <person name="Ogasawara N."/>
            <person name="Moszer I."/>
            <person name="Albertini A.M."/>
            <person name="Alloni G."/>
            <person name="Azevedo V."/>
            <person name="Bertero M.G."/>
            <person name="Bessieres P."/>
            <person name="Bolotin A."/>
            <person name="Borchert S."/>
            <person name="Borriss R."/>
            <person name="Boursier L."/>
            <person name="Brans A."/>
            <person name="Braun M."/>
            <person name="Brignell S.C."/>
            <person name="Bron S."/>
            <person name="Brouillet S."/>
            <person name="Bruschi C.V."/>
            <person name="Caldwell B."/>
            <person name="Capuano V."/>
            <person name="Carter N.M."/>
            <person name="Choi S.-K."/>
            <person name="Codani J.-J."/>
            <person name="Connerton I.F."/>
            <person name="Cummings N.J."/>
            <person name="Daniel R.A."/>
            <person name="Denizot F."/>
            <person name="Devine K.M."/>
            <person name="Duesterhoeft A."/>
            <person name="Ehrlich S.D."/>
            <person name="Emmerson P.T."/>
            <person name="Entian K.-D."/>
            <person name="Errington J."/>
            <person name="Fabret C."/>
            <person name="Ferrari E."/>
            <person name="Foulger D."/>
            <person name="Fritz C."/>
            <person name="Fujita M."/>
            <person name="Fujita Y."/>
            <person name="Fuma S."/>
            <person name="Galizzi A."/>
            <person name="Galleron N."/>
            <person name="Ghim S.-Y."/>
            <person name="Glaser P."/>
            <person name="Goffeau A."/>
            <person name="Golightly E.J."/>
            <person name="Grandi G."/>
            <person name="Guiseppi G."/>
            <person name="Guy B.J."/>
            <person name="Haga K."/>
            <person name="Haiech J."/>
            <person name="Harwood C.R."/>
            <person name="Henaut A."/>
            <person name="Hilbert H."/>
            <person name="Holsappel S."/>
            <person name="Hosono S."/>
            <person name="Hullo M.-F."/>
            <person name="Itaya M."/>
            <person name="Jones L.-M."/>
            <person name="Joris B."/>
            <person name="Karamata D."/>
            <person name="Kasahara Y."/>
            <person name="Klaerr-Blanchard M."/>
            <person name="Klein C."/>
            <person name="Kobayashi Y."/>
            <person name="Koetter P."/>
            <person name="Koningstein G."/>
            <person name="Krogh S."/>
            <person name="Kumano M."/>
            <person name="Kurita K."/>
            <person name="Lapidus A."/>
            <person name="Lardinois S."/>
            <person name="Lauber J."/>
            <person name="Lazarevic V."/>
            <person name="Lee S.-M."/>
            <person name="Levine A."/>
            <person name="Liu H."/>
            <person name="Masuda S."/>
            <person name="Mauel C."/>
            <person name="Medigue C."/>
            <person name="Medina N."/>
            <person name="Mellado R.P."/>
            <person name="Mizuno M."/>
            <person name="Moestl D."/>
            <person name="Nakai S."/>
            <person name="Noback M."/>
            <person name="Noone D."/>
            <person name="O'Reilly M."/>
            <person name="Ogawa K."/>
            <person name="Ogiwara A."/>
            <person name="Oudega B."/>
            <person name="Park S.-H."/>
            <person name="Parro V."/>
            <person name="Pohl T.M."/>
            <person name="Portetelle D."/>
            <person name="Porwollik S."/>
            <person name="Prescott A.M."/>
            <person name="Presecan E."/>
            <person name="Pujic P."/>
            <person name="Purnelle B."/>
            <person name="Rapoport G."/>
            <person name="Rey M."/>
            <person name="Reynolds S."/>
            <person name="Rieger M."/>
            <person name="Rivolta C."/>
            <person name="Rocha E."/>
            <person name="Roche B."/>
            <person name="Rose M."/>
            <person name="Sadaie Y."/>
            <person name="Sato T."/>
            <person name="Scanlan E."/>
            <person name="Schleich S."/>
            <person name="Schroeter R."/>
            <person name="Scoffone F."/>
            <person name="Sekiguchi J."/>
            <person name="Sekowska A."/>
            <person name="Seror S.J."/>
            <person name="Serror P."/>
            <person name="Shin B.-S."/>
            <person name="Soldo B."/>
            <person name="Sorokin A."/>
            <person name="Tacconi E."/>
            <person name="Takagi T."/>
            <person name="Takahashi H."/>
            <person name="Takemaru K."/>
            <person name="Takeuchi M."/>
            <person name="Tamakoshi A."/>
            <person name="Tanaka T."/>
            <person name="Terpstra P."/>
            <person name="Tognoni A."/>
            <person name="Tosato V."/>
            <person name="Uchiyama S."/>
            <person name="Vandenbol M."/>
            <person name="Vannier F."/>
            <person name="Vassarotti A."/>
            <person name="Viari A."/>
            <person name="Wambutt R."/>
            <person name="Wedler E."/>
            <person name="Wedler H."/>
            <person name="Weitzenegger T."/>
            <person name="Winters P."/>
            <person name="Wipat A."/>
            <person name="Yamamoto H."/>
            <person name="Yamane K."/>
            <person name="Yasumoto K."/>
            <person name="Yata K."/>
            <person name="Yoshida K."/>
            <person name="Yoshikawa H.-F."/>
            <person name="Zumstein E."/>
            <person name="Yoshikawa H."/>
            <person name="Danchin A."/>
        </authorList>
    </citation>
    <scope>NUCLEOTIDE SEQUENCE [LARGE SCALE GENOMIC DNA]</scope>
    <source>
        <strain>168</strain>
    </source>
</reference>
<organism>
    <name type="scientific">Bacillus subtilis (strain 168)</name>
    <dbReference type="NCBI Taxonomy" id="224308"/>
    <lineage>
        <taxon>Bacteria</taxon>
        <taxon>Bacillati</taxon>
        <taxon>Bacillota</taxon>
        <taxon>Bacilli</taxon>
        <taxon>Bacillales</taxon>
        <taxon>Bacillaceae</taxon>
        <taxon>Bacillus</taxon>
    </lineage>
</organism>
<dbReference type="EMBL" id="AL009126">
    <property type="protein sequence ID" value="CAB15393.1"/>
    <property type="molecule type" value="Genomic_DNA"/>
</dbReference>
<dbReference type="PIR" id="A70030">
    <property type="entry name" value="A70030"/>
</dbReference>
<dbReference type="RefSeq" id="NP_391268.1">
    <property type="nucleotide sequence ID" value="NC_000964.3"/>
</dbReference>
<dbReference type="RefSeq" id="WP_003228338.1">
    <property type="nucleotide sequence ID" value="NZ_OZ025638.1"/>
</dbReference>
<dbReference type="SMR" id="O32247"/>
<dbReference type="FunCoup" id="O32247">
    <property type="interactions" value="21"/>
</dbReference>
<dbReference type="IntAct" id="O32247">
    <property type="interactions" value="9"/>
</dbReference>
<dbReference type="STRING" id="224308.BSU33880"/>
<dbReference type="jPOST" id="O32247"/>
<dbReference type="PaxDb" id="224308-BSU33880"/>
<dbReference type="EnsemblBacteria" id="CAB15393">
    <property type="protein sequence ID" value="CAB15393"/>
    <property type="gene ID" value="BSU_33880"/>
</dbReference>
<dbReference type="GeneID" id="938637"/>
<dbReference type="KEGG" id="bsu:BSU33880"/>
<dbReference type="PATRIC" id="fig|224308.179.peg.3673"/>
<dbReference type="eggNOG" id="COG4640">
    <property type="taxonomic scope" value="Bacteria"/>
</dbReference>
<dbReference type="InParanoid" id="O32247"/>
<dbReference type="OrthoDB" id="1895190at2"/>
<dbReference type="BioCyc" id="BSUB:BSU33880-MONOMER"/>
<dbReference type="Proteomes" id="UP000001570">
    <property type="component" value="Chromosome"/>
</dbReference>
<dbReference type="GO" id="GO:0005886">
    <property type="term" value="C:plasma membrane"/>
    <property type="evidence" value="ECO:0007669"/>
    <property type="project" value="UniProtKB-SubCell"/>
</dbReference>
<dbReference type="InterPro" id="IPR056902">
    <property type="entry name" value="NTF2_YvbJ"/>
</dbReference>
<dbReference type="InterPro" id="IPR054529">
    <property type="entry name" value="TcaA_2nd"/>
</dbReference>
<dbReference type="InterPro" id="IPR054530">
    <property type="entry name" value="TcaA_4th"/>
</dbReference>
<dbReference type="InterPro" id="IPR026870">
    <property type="entry name" value="Zinc_ribbon_dom"/>
</dbReference>
<dbReference type="PANTHER" id="PTHR40038">
    <property type="entry name" value="MEMBRANE-ASSOCIATED PROTEIN TCAA"/>
    <property type="match status" value="1"/>
</dbReference>
<dbReference type="PANTHER" id="PTHR40038:SF1">
    <property type="entry name" value="MEMBRANE-ASSOCIATED PROTEIN TCAA"/>
    <property type="match status" value="1"/>
</dbReference>
<dbReference type="Pfam" id="PF25155">
    <property type="entry name" value="NTF2_YvbJ"/>
    <property type="match status" value="1"/>
</dbReference>
<dbReference type="Pfam" id="PF22813">
    <property type="entry name" value="TcaA_2nd"/>
    <property type="match status" value="1"/>
</dbReference>
<dbReference type="Pfam" id="PF22820">
    <property type="entry name" value="TcaA_3rd_4th"/>
    <property type="match status" value="2"/>
</dbReference>
<dbReference type="Pfam" id="PF22819">
    <property type="entry name" value="TcaA_5th"/>
    <property type="match status" value="1"/>
</dbReference>
<dbReference type="Pfam" id="PF13240">
    <property type="entry name" value="Zn_Ribbon_1"/>
    <property type="match status" value="1"/>
</dbReference>
<comment type="subcellular location">
    <subcellularLocation>
        <location evidence="2">Cell membrane</location>
        <topology evidence="2">Single-pass membrane protein</topology>
    </subcellularLocation>
</comment>
<gene>
    <name type="primary">yvbJ</name>
    <name type="ordered locus">BSU33880</name>
</gene>
<accession>O32247</accession>
<feature type="chain" id="PRO_0000370268" description="Uncharacterized membrane protein YvbJ">
    <location>
        <begin position="1"/>
        <end position="605"/>
    </location>
</feature>
<feature type="transmembrane region" description="Helical" evidence="1">
    <location>
        <begin position="56"/>
        <end position="78"/>
    </location>
</feature>